<reference key="1">
    <citation type="journal article" date="2005" name="Mol. Genet. Genomics">
        <title>A fine physical map of the rice chromosome 5.</title>
        <authorList>
            <person name="Cheng C.-H."/>
            <person name="Chung M.C."/>
            <person name="Liu S.-M."/>
            <person name="Chen S.-K."/>
            <person name="Kao F.Y."/>
            <person name="Lin S.-J."/>
            <person name="Hsiao S.-H."/>
            <person name="Tseng I.C."/>
            <person name="Hsing Y.-I.C."/>
            <person name="Wu H.-P."/>
            <person name="Chen C.-S."/>
            <person name="Shaw J.-F."/>
            <person name="Wu J."/>
            <person name="Matsumoto T."/>
            <person name="Sasaki T."/>
            <person name="Chen H.-C."/>
            <person name="Chow T.-Y."/>
        </authorList>
    </citation>
    <scope>NUCLEOTIDE SEQUENCE [LARGE SCALE GENOMIC DNA]</scope>
    <source>
        <strain>cv. Nipponbare</strain>
    </source>
</reference>
<reference key="2">
    <citation type="journal article" date="2005" name="Nature">
        <title>The map-based sequence of the rice genome.</title>
        <authorList>
            <consortium name="International rice genome sequencing project (IRGSP)"/>
        </authorList>
    </citation>
    <scope>NUCLEOTIDE SEQUENCE [LARGE SCALE GENOMIC DNA]</scope>
    <source>
        <strain>cv. Nipponbare</strain>
    </source>
</reference>
<reference key="3">
    <citation type="journal article" date="2008" name="Nucleic Acids Res.">
        <title>The rice annotation project database (RAP-DB): 2008 update.</title>
        <authorList>
            <consortium name="The rice annotation project (RAP)"/>
        </authorList>
    </citation>
    <scope>GENOME REANNOTATION</scope>
    <source>
        <strain>cv. Nipponbare</strain>
    </source>
</reference>
<reference key="4">
    <citation type="journal article" date="2013" name="Rice">
        <title>Improvement of the Oryza sativa Nipponbare reference genome using next generation sequence and optical map data.</title>
        <authorList>
            <person name="Kawahara Y."/>
            <person name="de la Bastide M."/>
            <person name="Hamilton J.P."/>
            <person name="Kanamori H."/>
            <person name="McCombie W.R."/>
            <person name="Ouyang S."/>
            <person name="Schwartz D.C."/>
            <person name="Tanaka T."/>
            <person name="Wu J."/>
            <person name="Zhou S."/>
            <person name="Childs K.L."/>
            <person name="Davidson R.M."/>
            <person name="Lin H."/>
            <person name="Quesada-Ocampo L."/>
            <person name="Vaillancourt B."/>
            <person name="Sakai H."/>
            <person name="Lee S.S."/>
            <person name="Kim J."/>
            <person name="Numa H."/>
            <person name="Itoh T."/>
            <person name="Buell C.R."/>
            <person name="Matsumoto T."/>
        </authorList>
    </citation>
    <scope>GENOME REANNOTATION</scope>
    <source>
        <strain>cv. Nipponbare</strain>
    </source>
</reference>
<reference key="5">
    <citation type="journal article" date="2005" name="PLoS Biol.">
        <title>The genomes of Oryza sativa: a history of duplications.</title>
        <authorList>
            <person name="Yu J."/>
            <person name="Wang J."/>
            <person name="Lin W."/>
            <person name="Li S."/>
            <person name="Li H."/>
            <person name="Zhou J."/>
            <person name="Ni P."/>
            <person name="Dong W."/>
            <person name="Hu S."/>
            <person name="Zeng C."/>
            <person name="Zhang J."/>
            <person name="Zhang Y."/>
            <person name="Li R."/>
            <person name="Xu Z."/>
            <person name="Li S."/>
            <person name="Li X."/>
            <person name="Zheng H."/>
            <person name="Cong L."/>
            <person name="Lin L."/>
            <person name="Yin J."/>
            <person name="Geng J."/>
            <person name="Li G."/>
            <person name="Shi J."/>
            <person name="Liu J."/>
            <person name="Lv H."/>
            <person name="Li J."/>
            <person name="Wang J."/>
            <person name="Deng Y."/>
            <person name="Ran L."/>
            <person name="Shi X."/>
            <person name="Wang X."/>
            <person name="Wu Q."/>
            <person name="Li C."/>
            <person name="Ren X."/>
            <person name="Wang J."/>
            <person name="Wang X."/>
            <person name="Li D."/>
            <person name="Liu D."/>
            <person name="Zhang X."/>
            <person name="Ji Z."/>
            <person name="Zhao W."/>
            <person name="Sun Y."/>
            <person name="Zhang Z."/>
            <person name="Bao J."/>
            <person name="Han Y."/>
            <person name="Dong L."/>
            <person name="Ji J."/>
            <person name="Chen P."/>
            <person name="Wu S."/>
            <person name="Liu J."/>
            <person name="Xiao Y."/>
            <person name="Bu D."/>
            <person name="Tan J."/>
            <person name="Yang L."/>
            <person name="Ye C."/>
            <person name="Zhang J."/>
            <person name="Xu J."/>
            <person name="Zhou Y."/>
            <person name="Yu Y."/>
            <person name="Zhang B."/>
            <person name="Zhuang S."/>
            <person name="Wei H."/>
            <person name="Liu B."/>
            <person name="Lei M."/>
            <person name="Yu H."/>
            <person name="Li Y."/>
            <person name="Xu H."/>
            <person name="Wei S."/>
            <person name="He X."/>
            <person name="Fang L."/>
            <person name="Zhang Z."/>
            <person name="Zhang Y."/>
            <person name="Huang X."/>
            <person name="Su Z."/>
            <person name="Tong W."/>
            <person name="Li J."/>
            <person name="Tong Z."/>
            <person name="Li S."/>
            <person name="Ye J."/>
            <person name="Wang L."/>
            <person name="Fang L."/>
            <person name="Lei T."/>
            <person name="Chen C.-S."/>
            <person name="Chen H.-C."/>
            <person name="Xu Z."/>
            <person name="Li H."/>
            <person name="Huang H."/>
            <person name="Zhang F."/>
            <person name="Xu H."/>
            <person name="Li N."/>
            <person name="Zhao C."/>
            <person name="Li S."/>
            <person name="Dong L."/>
            <person name="Huang Y."/>
            <person name="Li L."/>
            <person name="Xi Y."/>
            <person name="Qi Q."/>
            <person name="Li W."/>
            <person name="Zhang B."/>
            <person name="Hu W."/>
            <person name="Zhang Y."/>
            <person name="Tian X."/>
            <person name="Jiao Y."/>
            <person name="Liang X."/>
            <person name="Jin J."/>
            <person name="Gao L."/>
            <person name="Zheng W."/>
            <person name="Hao B."/>
            <person name="Liu S.-M."/>
            <person name="Wang W."/>
            <person name="Yuan L."/>
            <person name="Cao M."/>
            <person name="McDermott J."/>
            <person name="Samudrala R."/>
            <person name="Wang J."/>
            <person name="Wong G.K.-S."/>
            <person name="Yang H."/>
        </authorList>
    </citation>
    <scope>NUCLEOTIDE SEQUENCE [LARGE SCALE GENOMIC DNA]</scope>
    <source>
        <strain>cv. Nipponbare</strain>
    </source>
</reference>
<reference key="6">
    <citation type="journal article" date="2003" name="Science">
        <title>Collection, mapping, and annotation of over 28,000 cDNA clones from japonica rice.</title>
        <authorList>
            <consortium name="The rice full-length cDNA consortium"/>
        </authorList>
    </citation>
    <scope>NUCLEOTIDE SEQUENCE [LARGE SCALE MRNA]</scope>
    <source>
        <strain>cv. Nipponbare</strain>
    </source>
</reference>
<reference key="7">
    <citation type="journal article" date="2006" name="Plant Mol. Biol.">
        <title>The Arabidopsis AtDi19 gene family encodes a novel type of Cys2/His2 zinc-finger protein implicated in ABA-independent dehydration, high-salinity stress and light signaling pathways.</title>
        <authorList>
            <person name="Rodriguez Milla M.A."/>
            <person name="Townsend J."/>
            <person name="Chang I.-F."/>
            <person name="Cushman J.C."/>
        </authorList>
    </citation>
    <scope>GENE FAMILY</scope>
    <scope>NOMENCLATURE</scope>
</reference>
<keyword id="KW-1185">Reference proteome</keyword>
<protein>
    <recommendedName>
        <fullName>Protein DEHYDRATION-INDUCED 19</fullName>
    </recommendedName>
    <alternativeName>
        <fullName>OsDi19</fullName>
    </alternativeName>
</protein>
<dbReference type="EMBL" id="AC113333">
    <property type="protein sequence ID" value="AAU10650.1"/>
    <property type="molecule type" value="Genomic_DNA"/>
</dbReference>
<dbReference type="EMBL" id="AP008211">
    <property type="protein sequence ID" value="BAF18233.1"/>
    <property type="molecule type" value="Genomic_DNA"/>
</dbReference>
<dbReference type="EMBL" id="AP014961">
    <property type="protein sequence ID" value="BAS95331.1"/>
    <property type="molecule type" value="Genomic_DNA"/>
</dbReference>
<dbReference type="EMBL" id="CM000142">
    <property type="protein sequence ID" value="EEE64687.1"/>
    <property type="molecule type" value="Genomic_DNA"/>
</dbReference>
<dbReference type="EMBL" id="AK061766">
    <property type="protein sequence ID" value="BAG88100.1"/>
    <property type="molecule type" value="mRNA"/>
</dbReference>
<dbReference type="EMBL" id="AK109438">
    <property type="protein sequence ID" value="BAG98749.1"/>
    <property type="molecule type" value="mRNA"/>
</dbReference>
<dbReference type="RefSeq" id="XP_015640092.1">
    <property type="nucleotide sequence ID" value="XM_015784606.1"/>
</dbReference>
<dbReference type="FunCoup" id="Q688X9">
    <property type="interactions" value="1"/>
</dbReference>
<dbReference type="PaxDb" id="39947-Q688X9"/>
<dbReference type="EnsemblPlants" id="Os05t0562200-01">
    <property type="protein sequence ID" value="Os05t0562200-01"/>
    <property type="gene ID" value="Os05g0562200"/>
</dbReference>
<dbReference type="Gramene" id="Os05t0562200-01">
    <property type="protein sequence ID" value="Os05t0562200-01"/>
    <property type="gene ID" value="Os05g0562200"/>
</dbReference>
<dbReference type="KEGG" id="dosa:Os05g0562200"/>
<dbReference type="eggNOG" id="ENOG502QVUG">
    <property type="taxonomic scope" value="Eukaryota"/>
</dbReference>
<dbReference type="HOGENOM" id="CLU_072240_0_0_1"/>
<dbReference type="InParanoid" id="Q688X9"/>
<dbReference type="OMA" id="FEVEDDM"/>
<dbReference type="OrthoDB" id="7873042at2759"/>
<dbReference type="Proteomes" id="UP000000763">
    <property type="component" value="Chromosome 5"/>
</dbReference>
<dbReference type="Proteomes" id="UP000007752">
    <property type="component" value="Chromosome 5"/>
</dbReference>
<dbReference type="Proteomes" id="UP000059680">
    <property type="component" value="Chromosome 5"/>
</dbReference>
<dbReference type="InterPro" id="IPR033347">
    <property type="entry name" value="DI19"/>
</dbReference>
<dbReference type="InterPro" id="IPR027935">
    <property type="entry name" value="Di19_C"/>
</dbReference>
<dbReference type="InterPro" id="IPR008598">
    <property type="entry name" value="Di19_Zn-bd"/>
</dbReference>
<dbReference type="PANTHER" id="PTHR31875">
    <property type="entry name" value="PROTEIN DEHYDRATION-INDUCED 19"/>
    <property type="match status" value="1"/>
</dbReference>
<dbReference type="PANTHER" id="PTHR31875:SF6">
    <property type="entry name" value="PROTEIN DEHYDRATION-INDUCED 19"/>
    <property type="match status" value="1"/>
</dbReference>
<dbReference type="Pfam" id="PF14571">
    <property type="entry name" value="Di19_C"/>
    <property type="match status" value="1"/>
</dbReference>
<dbReference type="Pfam" id="PF05605">
    <property type="entry name" value="zf-Di19"/>
    <property type="match status" value="1"/>
</dbReference>
<name>DI191_ORYSJ</name>
<feature type="chain" id="PRO_0000304420" description="Protein DEHYDRATION-INDUCED 19">
    <location>
        <begin position="1"/>
        <end position="226"/>
    </location>
</feature>
<feature type="region of interest" description="Disordered" evidence="1">
    <location>
        <begin position="158"/>
        <end position="208"/>
    </location>
</feature>
<feature type="compositionally biased region" description="Basic and acidic residues" evidence="1">
    <location>
        <begin position="196"/>
        <end position="205"/>
    </location>
</feature>
<proteinExistence type="evidence at transcript level"/>
<accession>Q688X9</accession>
<accession>A3B6T3</accession>
<accession>B7E6V3</accession>
<organism>
    <name type="scientific">Oryza sativa subsp. japonica</name>
    <name type="common">Rice</name>
    <dbReference type="NCBI Taxonomy" id="39947"/>
    <lineage>
        <taxon>Eukaryota</taxon>
        <taxon>Viridiplantae</taxon>
        <taxon>Streptophyta</taxon>
        <taxon>Embryophyta</taxon>
        <taxon>Tracheophyta</taxon>
        <taxon>Spermatophyta</taxon>
        <taxon>Magnoliopsida</taxon>
        <taxon>Liliopsida</taxon>
        <taxon>Poales</taxon>
        <taxon>Poaceae</taxon>
        <taxon>BOP clade</taxon>
        <taxon>Oryzoideae</taxon>
        <taxon>Oryzeae</taxon>
        <taxon>Oryzinae</taxon>
        <taxon>Oryza</taxon>
        <taxon>Oryza sativa</taxon>
    </lineage>
</organism>
<evidence type="ECO:0000256" key="1">
    <source>
        <dbReference type="SAM" id="MobiDB-lite"/>
    </source>
</evidence>
<evidence type="ECO:0000305" key="2"/>
<evidence type="ECO:0000312" key="3">
    <source>
        <dbReference type="EMBL" id="EEE64687.1"/>
    </source>
</evidence>
<comment type="similarity">
    <text evidence="2">Belongs to the Di19 family.</text>
</comment>
<gene>
    <name type="primary">DI19-1</name>
    <name type="synonym">DI19</name>
    <name type="ordered locus">Os05g0562200</name>
    <name type="ordered locus">LOC_Os05g48800</name>
    <name type="ORF">OJ1115_B06.15</name>
    <name type="ORF">OsJ_018755</name>
    <name evidence="3" type="ORF">OsJ_19542</name>
</gene>
<sequence length="226" mass="25302">MDSEHWISRLAAAKRFYAAQLGHADRAGMEEVDMDEEVRPEFACPYCYEDHDVVSLCAHLEEEHPFEPHAAPCPICSDKIAKDMLNHITVQHGYLFKNRRRLRRFVIPGSQALSLLSRDLREAHLQVLLGGGGHRSNNSSNTTNISADPLLSSFGLSFPTSDTEETSKPPISIPDDASVIKETPAQPWDSSIDSSLTREEREQKRKQASVRATFVQDLLLTTLFGD</sequence>